<comment type="catalytic activity">
    <reaction evidence="1">
        <text>tRNA(Gly) + glycine + ATP = glycyl-tRNA(Gly) + AMP + diphosphate</text>
        <dbReference type="Rhea" id="RHEA:16013"/>
        <dbReference type="Rhea" id="RHEA-COMP:9664"/>
        <dbReference type="Rhea" id="RHEA-COMP:9683"/>
        <dbReference type="ChEBI" id="CHEBI:30616"/>
        <dbReference type="ChEBI" id="CHEBI:33019"/>
        <dbReference type="ChEBI" id="CHEBI:57305"/>
        <dbReference type="ChEBI" id="CHEBI:78442"/>
        <dbReference type="ChEBI" id="CHEBI:78522"/>
        <dbReference type="ChEBI" id="CHEBI:456215"/>
        <dbReference type="EC" id="6.1.1.14"/>
    </reaction>
</comment>
<comment type="subunit">
    <text evidence="1">Tetramer of two alpha and two beta subunits.</text>
</comment>
<comment type="subcellular location">
    <subcellularLocation>
        <location evidence="1">Cytoplasm</location>
    </subcellularLocation>
</comment>
<comment type="similarity">
    <text evidence="1">Belongs to the class-II aminoacyl-tRNA synthetase family.</text>
</comment>
<name>SYGA_AERS4</name>
<evidence type="ECO:0000255" key="1">
    <source>
        <dbReference type="HAMAP-Rule" id="MF_00254"/>
    </source>
</evidence>
<organism>
    <name type="scientific">Aeromonas salmonicida (strain A449)</name>
    <dbReference type="NCBI Taxonomy" id="382245"/>
    <lineage>
        <taxon>Bacteria</taxon>
        <taxon>Pseudomonadati</taxon>
        <taxon>Pseudomonadota</taxon>
        <taxon>Gammaproteobacteria</taxon>
        <taxon>Aeromonadales</taxon>
        <taxon>Aeromonadaceae</taxon>
        <taxon>Aeromonas</taxon>
    </lineage>
</organism>
<accession>A4STG2</accession>
<reference key="1">
    <citation type="journal article" date="2008" name="BMC Genomics">
        <title>The genome of Aeromonas salmonicida subsp. salmonicida A449: insights into the evolution of a fish pathogen.</title>
        <authorList>
            <person name="Reith M.E."/>
            <person name="Singh R.K."/>
            <person name="Curtis B."/>
            <person name="Boyd J.M."/>
            <person name="Bouevitch A."/>
            <person name="Kimball J."/>
            <person name="Munholland J."/>
            <person name="Murphy C."/>
            <person name="Sarty D."/>
            <person name="Williams J."/>
            <person name="Nash J.H."/>
            <person name="Johnson S.C."/>
            <person name="Brown L.L."/>
        </authorList>
    </citation>
    <scope>NUCLEOTIDE SEQUENCE [LARGE SCALE GENOMIC DNA]</scope>
    <source>
        <strain>A449</strain>
    </source>
</reference>
<dbReference type="EC" id="6.1.1.14" evidence="1"/>
<dbReference type="EMBL" id="CP000644">
    <property type="protein sequence ID" value="ABO92184.1"/>
    <property type="molecule type" value="Genomic_DNA"/>
</dbReference>
<dbReference type="RefSeq" id="WP_005320598.1">
    <property type="nucleotide sequence ID" value="NC_009348.1"/>
</dbReference>
<dbReference type="SMR" id="A4STG2"/>
<dbReference type="STRING" id="29491.GCA_000820065_02836"/>
<dbReference type="KEGG" id="asa:ASA_4260"/>
<dbReference type="eggNOG" id="COG0752">
    <property type="taxonomic scope" value="Bacteria"/>
</dbReference>
<dbReference type="HOGENOM" id="CLU_057066_1_0_6"/>
<dbReference type="Proteomes" id="UP000000225">
    <property type="component" value="Chromosome"/>
</dbReference>
<dbReference type="GO" id="GO:0005829">
    <property type="term" value="C:cytosol"/>
    <property type="evidence" value="ECO:0007669"/>
    <property type="project" value="TreeGrafter"/>
</dbReference>
<dbReference type="GO" id="GO:0005524">
    <property type="term" value="F:ATP binding"/>
    <property type="evidence" value="ECO:0007669"/>
    <property type="project" value="UniProtKB-UniRule"/>
</dbReference>
<dbReference type="GO" id="GO:0004820">
    <property type="term" value="F:glycine-tRNA ligase activity"/>
    <property type="evidence" value="ECO:0007669"/>
    <property type="project" value="UniProtKB-UniRule"/>
</dbReference>
<dbReference type="GO" id="GO:0006426">
    <property type="term" value="P:glycyl-tRNA aminoacylation"/>
    <property type="evidence" value="ECO:0007669"/>
    <property type="project" value="UniProtKB-UniRule"/>
</dbReference>
<dbReference type="CDD" id="cd00733">
    <property type="entry name" value="GlyRS_alpha_core"/>
    <property type="match status" value="1"/>
</dbReference>
<dbReference type="FunFam" id="1.20.58.180:FF:000001">
    <property type="entry name" value="Glycine--tRNA ligase alpha subunit"/>
    <property type="match status" value="1"/>
</dbReference>
<dbReference type="FunFam" id="3.30.930.10:FF:000006">
    <property type="entry name" value="Glycine--tRNA ligase alpha subunit"/>
    <property type="match status" value="1"/>
</dbReference>
<dbReference type="Gene3D" id="3.30.930.10">
    <property type="entry name" value="Bira Bifunctional Protein, Domain 2"/>
    <property type="match status" value="1"/>
</dbReference>
<dbReference type="Gene3D" id="1.20.58.180">
    <property type="entry name" value="Class II aaRS and biotin synthetases, domain 2"/>
    <property type="match status" value="1"/>
</dbReference>
<dbReference type="HAMAP" id="MF_00254">
    <property type="entry name" value="Gly_tRNA_synth_alpha"/>
    <property type="match status" value="1"/>
</dbReference>
<dbReference type="InterPro" id="IPR045864">
    <property type="entry name" value="aa-tRNA-synth_II/BPL/LPL"/>
</dbReference>
<dbReference type="InterPro" id="IPR006194">
    <property type="entry name" value="Gly-tRNA-synth_heterodimer"/>
</dbReference>
<dbReference type="InterPro" id="IPR002310">
    <property type="entry name" value="Gly-tRNA_ligase_asu"/>
</dbReference>
<dbReference type="NCBIfam" id="TIGR00388">
    <property type="entry name" value="glyQ"/>
    <property type="match status" value="1"/>
</dbReference>
<dbReference type="NCBIfam" id="NF006827">
    <property type="entry name" value="PRK09348.1"/>
    <property type="match status" value="1"/>
</dbReference>
<dbReference type="PANTHER" id="PTHR30075:SF2">
    <property type="entry name" value="GLYCINE--TRNA LIGASE, CHLOROPLASTIC_MITOCHONDRIAL 2"/>
    <property type="match status" value="1"/>
</dbReference>
<dbReference type="PANTHER" id="PTHR30075">
    <property type="entry name" value="GLYCYL-TRNA SYNTHETASE"/>
    <property type="match status" value="1"/>
</dbReference>
<dbReference type="Pfam" id="PF02091">
    <property type="entry name" value="tRNA-synt_2e"/>
    <property type="match status" value="1"/>
</dbReference>
<dbReference type="PRINTS" id="PR01044">
    <property type="entry name" value="TRNASYNTHGA"/>
</dbReference>
<dbReference type="SUPFAM" id="SSF55681">
    <property type="entry name" value="Class II aaRS and biotin synthetases"/>
    <property type="match status" value="1"/>
</dbReference>
<dbReference type="PROSITE" id="PS50861">
    <property type="entry name" value="AA_TRNA_LIGASE_II_GLYAB"/>
    <property type="match status" value="1"/>
</dbReference>
<feature type="chain" id="PRO_1000047394" description="Glycine--tRNA ligase alpha subunit">
    <location>
        <begin position="1"/>
        <end position="307"/>
    </location>
</feature>
<protein>
    <recommendedName>
        <fullName evidence="1">Glycine--tRNA ligase alpha subunit</fullName>
        <ecNumber evidence="1">6.1.1.14</ecNumber>
    </recommendedName>
    <alternativeName>
        <fullName evidence="1">Glycyl-tRNA synthetase alpha subunit</fullName>
        <shortName evidence="1">GlyRS</shortName>
    </alternativeName>
</protein>
<gene>
    <name evidence="1" type="primary">glyQ</name>
    <name type="ordered locus">ASA_4260</name>
</gene>
<keyword id="KW-0030">Aminoacyl-tRNA synthetase</keyword>
<keyword id="KW-0067">ATP-binding</keyword>
<keyword id="KW-0963">Cytoplasm</keyword>
<keyword id="KW-0436">Ligase</keyword>
<keyword id="KW-0547">Nucleotide-binding</keyword>
<keyword id="KW-0648">Protein biosynthesis</keyword>
<proteinExistence type="inferred from homology"/>
<sequence length="307" mass="35262">MQKFDVKTFQGLILQLQDYWSRQGCTIIQPLDMEVGAGTSHPMTCLRALGPEPIACAYVQPSRRPTDGRYGENPNRLQHYYQFQVIIKPSPDNIQELYLGSLKELGMDPEIHDIRFVEDNWENPTLGAWGLGWEVWLNGMEVTQFTYFQQVGGLECKPVTGEITYGLERLAMYIQGVDSVYDLVWSDGPLGKTTYGDVFHQNEVEQSTYNFEHADVDFLFHCFEQYEKEAQHLLALETPLPLPAYERILKAAHSFNLLDARKAISVTERQRYILRIRTLTKAVAEAYYASREALGFPMCKRTENKQG</sequence>